<sequence>MLDFEKPLFEIKNKIDALKESQEKNDVDLQEEIDMLEASLERETEKIYMHLKPWDRVQLARLQERPTTLDYISYIFDEFIELHGDRNYRDDPAMVGGIGYLNGQPVTVIGQQRGKDTKDNIYRNFGMAHPEGYRKALRLMKQAEKFGRPIFTFIDTKGAYPGKAAEERGQSESIAKNLIEMASLKVPVISLVIGEGGSGGALGIGIANRVLMLENSTYSVISPEGAAALLWKDSNLSKIAAETMKITAPDLKELQIIDDVINEPLGGAHKDVALQAERIKEAFTKQLSELEKLNGQELADDRFEKFRQIGEFKEQ</sequence>
<reference key="1">
    <citation type="journal article" date="2009" name="Appl. Environ. Microbiol.">
        <title>Genome analysis of the meat starter culture bacterium Staphylococcus carnosus TM300.</title>
        <authorList>
            <person name="Rosenstein R."/>
            <person name="Nerz C."/>
            <person name="Biswas L."/>
            <person name="Resch A."/>
            <person name="Raddatz G."/>
            <person name="Schuster S.C."/>
            <person name="Goetz F."/>
        </authorList>
    </citation>
    <scope>NUCLEOTIDE SEQUENCE [LARGE SCALE GENOMIC DNA]</scope>
    <source>
        <strain>TM300</strain>
    </source>
</reference>
<accession>B9DN95</accession>
<evidence type="ECO:0000255" key="1">
    <source>
        <dbReference type="HAMAP-Rule" id="MF_00823"/>
    </source>
</evidence>
<evidence type="ECO:0000255" key="2">
    <source>
        <dbReference type="PROSITE-ProRule" id="PRU01137"/>
    </source>
</evidence>
<dbReference type="EC" id="2.1.3.15" evidence="1"/>
<dbReference type="EMBL" id="AM295250">
    <property type="protein sequence ID" value="CAL28210.1"/>
    <property type="molecule type" value="Genomic_DNA"/>
</dbReference>
<dbReference type="RefSeq" id="WP_015900550.1">
    <property type="nucleotide sequence ID" value="NC_012121.1"/>
</dbReference>
<dbReference type="SMR" id="B9DN95"/>
<dbReference type="GeneID" id="93793727"/>
<dbReference type="KEGG" id="sca:SCA_1305"/>
<dbReference type="eggNOG" id="COG0825">
    <property type="taxonomic scope" value="Bacteria"/>
</dbReference>
<dbReference type="HOGENOM" id="CLU_015486_0_2_9"/>
<dbReference type="OrthoDB" id="9808023at2"/>
<dbReference type="BioCyc" id="SCAR396513:SCA_RS06500-MONOMER"/>
<dbReference type="UniPathway" id="UPA00655">
    <property type="reaction ID" value="UER00711"/>
</dbReference>
<dbReference type="Proteomes" id="UP000000444">
    <property type="component" value="Chromosome"/>
</dbReference>
<dbReference type="GO" id="GO:0009317">
    <property type="term" value="C:acetyl-CoA carboxylase complex"/>
    <property type="evidence" value="ECO:0007669"/>
    <property type="project" value="InterPro"/>
</dbReference>
<dbReference type="GO" id="GO:0003989">
    <property type="term" value="F:acetyl-CoA carboxylase activity"/>
    <property type="evidence" value="ECO:0007669"/>
    <property type="project" value="InterPro"/>
</dbReference>
<dbReference type="GO" id="GO:0005524">
    <property type="term" value="F:ATP binding"/>
    <property type="evidence" value="ECO:0007669"/>
    <property type="project" value="UniProtKB-KW"/>
</dbReference>
<dbReference type="GO" id="GO:0016743">
    <property type="term" value="F:carboxyl- or carbamoyltransferase activity"/>
    <property type="evidence" value="ECO:0007669"/>
    <property type="project" value="UniProtKB-UniRule"/>
</dbReference>
<dbReference type="GO" id="GO:0006633">
    <property type="term" value="P:fatty acid biosynthetic process"/>
    <property type="evidence" value="ECO:0007669"/>
    <property type="project" value="UniProtKB-KW"/>
</dbReference>
<dbReference type="GO" id="GO:2001295">
    <property type="term" value="P:malonyl-CoA biosynthetic process"/>
    <property type="evidence" value="ECO:0007669"/>
    <property type="project" value="UniProtKB-UniRule"/>
</dbReference>
<dbReference type="Gene3D" id="3.90.226.10">
    <property type="entry name" value="2-enoyl-CoA Hydratase, Chain A, domain 1"/>
    <property type="match status" value="1"/>
</dbReference>
<dbReference type="HAMAP" id="MF_00823">
    <property type="entry name" value="AcetylCoA_CT_alpha"/>
    <property type="match status" value="1"/>
</dbReference>
<dbReference type="InterPro" id="IPR001095">
    <property type="entry name" value="Acetyl_CoA_COase_a_su"/>
</dbReference>
<dbReference type="InterPro" id="IPR029045">
    <property type="entry name" value="ClpP/crotonase-like_dom_sf"/>
</dbReference>
<dbReference type="InterPro" id="IPR011763">
    <property type="entry name" value="COA_CT_C"/>
</dbReference>
<dbReference type="NCBIfam" id="TIGR00513">
    <property type="entry name" value="accA"/>
    <property type="match status" value="1"/>
</dbReference>
<dbReference type="NCBIfam" id="NF041504">
    <property type="entry name" value="AccA_sub"/>
    <property type="match status" value="1"/>
</dbReference>
<dbReference type="NCBIfam" id="NF004344">
    <property type="entry name" value="PRK05724.1"/>
    <property type="match status" value="1"/>
</dbReference>
<dbReference type="PANTHER" id="PTHR42853">
    <property type="entry name" value="ACETYL-COENZYME A CARBOXYLASE CARBOXYL TRANSFERASE SUBUNIT ALPHA"/>
    <property type="match status" value="1"/>
</dbReference>
<dbReference type="PANTHER" id="PTHR42853:SF3">
    <property type="entry name" value="ACETYL-COENZYME A CARBOXYLASE CARBOXYL TRANSFERASE SUBUNIT ALPHA, CHLOROPLASTIC"/>
    <property type="match status" value="1"/>
</dbReference>
<dbReference type="Pfam" id="PF03255">
    <property type="entry name" value="ACCA"/>
    <property type="match status" value="1"/>
</dbReference>
<dbReference type="PRINTS" id="PR01069">
    <property type="entry name" value="ACCCTRFRASEA"/>
</dbReference>
<dbReference type="SUPFAM" id="SSF52096">
    <property type="entry name" value="ClpP/crotonase"/>
    <property type="match status" value="1"/>
</dbReference>
<dbReference type="PROSITE" id="PS50989">
    <property type="entry name" value="COA_CT_CTER"/>
    <property type="match status" value="1"/>
</dbReference>
<keyword id="KW-0067">ATP-binding</keyword>
<keyword id="KW-0963">Cytoplasm</keyword>
<keyword id="KW-0275">Fatty acid biosynthesis</keyword>
<keyword id="KW-0276">Fatty acid metabolism</keyword>
<keyword id="KW-0444">Lipid biosynthesis</keyword>
<keyword id="KW-0443">Lipid metabolism</keyword>
<keyword id="KW-0547">Nucleotide-binding</keyword>
<keyword id="KW-1185">Reference proteome</keyword>
<keyword id="KW-0808">Transferase</keyword>
<feature type="chain" id="PRO_1000148749" description="Acetyl-coenzyme A carboxylase carboxyl transferase subunit alpha">
    <location>
        <begin position="1"/>
        <end position="315"/>
    </location>
</feature>
<feature type="domain" description="CoA carboxyltransferase C-terminal" evidence="2">
    <location>
        <begin position="32"/>
        <end position="289"/>
    </location>
</feature>
<name>ACCA_STACT</name>
<proteinExistence type="inferred from homology"/>
<comment type="function">
    <text evidence="1">Component of the acetyl coenzyme A carboxylase (ACC) complex. First, biotin carboxylase catalyzes the carboxylation of biotin on its carrier protein (BCCP) and then the CO(2) group is transferred by the carboxyltransferase to acetyl-CoA to form malonyl-CoA.</text>
</comment>
<comment type="catalytic activity">
    <reaction evidence="1">
        <text>N(6)-carboxybiotinyl-L-lysyl-[protein] + acetyl-CoA = N(6)-biotinyl-L-lysyl-[protein] + malonyl-CoA</text>
        <dbReference type="Rhea" id="RHEA:54728"/>
        <dbReference type="Rhea" id="RHEA-COMP:10505"/>
        <dbReference type="Rhea" id="RHEA-COMP:10506"/>
        <dbReference type="ChEBI" id="CHEBI:57288"/>
        <dbReference type="ChEBI" id="CHEBI:57384"/>
        <dbReference type="ChEBI" id="CHEBI:83144"/>
        <dbReference type="ChEBI" id="CHEBI:83145"/>
        <dbReference type="EC" id="2.1.3.15"/>
    </reaction>
</comment>
<comment type="pathway">
    <text evidence="1">Lipid metabolism; malonyl-CoA biosynthesis; malonyl-CoA from acetyl-CoA: step 1/1.</text>
</comment>
<comment type="subunit">
    <text evidence="1">Acetyl-CoA carboxylase is a heterohexamer composed of biotin carboxyl carrier protein (AccB), biotin carboxylase (AccC) and two subunits each of ACCase subunit alpha (AccA) and ACCase subunit beta (AccD).</text>
</comment>
<comment type="subcellular location">
    <subcellularLocation>
        <location evidence="1">Cytoplasm</location>
    </subcellularLocation>
</comment>
<comment type="similarity">
    <text evidence="1">Belongs to the AccA family.</text>
</comment>
<gene>
    <name evidence="1" type="primary">accA</name>
    <name type="ordered locus">Sca_1305</name>
</gene>
<organism>
    <name type="scientific">Staphylococcus carnosus (strain TM300)</name>
    <dbReference type="NCBI Taxonomy" id="396513"/>
    <lineage>
        <taxon>Bacteria</taxon>
        <taxon>Bacillati</taxon>
        <taxon>Bacillota</taxon>
        <taxon>Bacilli</taxon>
        <taxon>Bacillales</taxon>
        <taxon>Staphylococcaceae</taxon>
        <taxon>Staphylococcus</taxon>
    </lineage>
</organism>
<protein>
    <recommendedName>
        <fullName evidence="1">Acetyl-coenzyme A carboxylase carboxyl transferase subunit alpha</fullName>
        <shortName evidence="1">ACCase subunit alpha</shortName>
        <shortName evidence="1">Acetyl-CoA carboxylase carboxyltransferase subunit alpha</shortName>
        <ecNumber evidence="1">2.1.3.15</ecNumber>
    </recommendedName>
</protein>